<comment type="function">
    <text evidence="1 7 8">Converts endogenous N-acetylglucosamine (GlcNAc), a major component of complex carbohydrates, from lysosomal degradation or nutritional sources into GlcNAc 6-phosphate (PubMed:22692205). Involved in the N-glycolylneuraminic acid (Neu5Gc) degradation pathway: although human is not able to catalyze formation of Neu5Gc due to the inactive CMAHP enzyme, Neu5Gc is present in food and must be degraded (PubMed:22692205). Also has N-acetylmannosamine (ManNAc) kinase activity (By similarity). Also involved in innate immunity by promoting detection of bacterial peptidoglycan by NOD2: acts by catalyzing phosphorylation of muramyl dipeptide (MDP), a fragment of bacterial peptidoglycan, to generate 6-O-phospho-muramyl dipeptide, which acts as a direct ligand for NOD2 (PubMed:36002575).</text>
</comment>
<comment type="catalytic activity">
    <reaction evidence="7">
        <text>N-acetyl-D-glucosamine + ATP = N-acetyl-D-glucosamine 6-phosphate + ADP + H(+)</text>
        <dbReference type="Rhea" id="RHEA:17417"/>
        <dbReference type="ChEBI" id="CHEBI:15378"/>
        <dbReference type="ChEBI" id="CHEBI:30616"/>
        <dbReference type="ChEBI" id="CHEBI:57513"/>
        <dbReference type="ChEBI" id="CHEBI:456216"/>
        <dbReference type="ChEBI" id="CHEBI:506227"/>
        <dbReference type="EC" id="2.7.1.59"/>
    </reaction>
    <physiologicalReaction direction="left-to-right" evidence="7">
        <dbReference type="Rhea" id="RHEA:17418"/>
    </physiologicalReaction>
</comment>
<comment type="catalytic activity">
    <reaction evidence="1">
        <text>aldehydo-N-acetyl-D-mannosamine + ATP = aldehydo-N-acetyl-D-mannosamine 6-phosphate + ADP + H(+)</text>
        <dbReference type="Rhea" id="RHEA:25253"/>
        <dbReference type="ChEBI" id="CHEBI:15378"/>
        <dbReference type="ChEBI" id="CHEBI:17122"/>
        <dbReference type="ChEBI" id="CHEBI:30616"/>
        <dbReference type="ChEBI" id="CHEBI:58557"/>
        <dbReference type="ChEBI" id="CHEBI:456216"/>
        <dbReference type="EC" id="2.7.1.60"/>
    </reaction>
    <physiologicalReaction direction="left-to-right" evidence="1">
        <dbReference type="Rhea" id="RHEA:25254"/>
    </physiologicalReaction>
</comment>
<comment type="catalytic activity">
    <reaction evidence="8">
        <text>N-acetyl-D-muramoyl-L-alanyl-D-isoglutamine + ATP = 6-O-phospho-N-acetyl-D-muramoyl-L-alanyl-D-isoglutamine + ADP + H(+)</text>
        <dbReference type="Rhea" id="RHEA:75935"/>
        <dbReference type="ChEBI" id="CHEBI:15378"/>
        <dbReference type="ChEBI" id="CHEBI:30616"/>
        <dbReference type="ChEBI" id="CHEBI:155830"/>
        <dbReference type="ChEBI" id="CHEBI:194492"/>
        <dbReference type="ChEBI" id="CHEBI:456216"/>
    </reaction>
    <physiologicalReaction direction="left-to-right" evidence="8">
        <dbReference type="Rhea" id="RHEA:75936"/>
    </physiologicalReaction>
</comment>
<comment type="pathway">
    <text evidence="7">Amino-sugar metabolism; N-acetylneuraminate degradation.</text>
</comment>
<comment type="subunit">
    <text evidence="6">Homodimer.</text>
</comment>
<comment type="interaction">
    <interactant intactId="EBI-372578">
        <id>Q9UJ70</id>
    </interactant>
    <interactant intactId="EBI-2559426">
        <id>Q9NZ32</id>
        <label>ACTR10</label>
    </interactant>
    <organismsDiffer>false</organismsDiffer>
    <experiments>3</experiments>
</comment>
<comment type="interaction">
    <interactant intactId="EBI-372578">
        <id>Q9UJ70</id>
    </interactant>
    <interactant intactId="EBI-711290">
        <id>P42773</id>
        <label>CDKN2C</label>
    </interactant>
    <organismsDiffer>false</organismsDiffer>
    <experiments>4</experiments>
</comment>
<comment type="interaction">
    <interactant intactId="EBI-372578">
        <id>Q9UJ70</id>
    </interactant>
    <interactant intactId="EBI-347111">
        <id>Q9UI36</id>
        <label>DACH1</label>
    </interactant>
    <organismsDiffer>false</organismsDiffer>
    <experiments>3</experiments>
</comment>
<comment type="interaction">
    <interactant intactId="EBI-372578">
        <id>Q9UJ70</id>
    </interactant>
    <interactant intactId="EBI-10186082">
        <id>Q9UI36-2</id>
        <label>DACH1</label>
    </interactant>
    <organismsDiffer>false</organismsDiffer>
    <experiments>5</experiments>
</comment>
<comment type="interaction">
    <interactant intactId="EBI-372578">
        <id>Q9UJ70</id>
    </interactant>
    <interactant intactId="EBI-739832">
        <id>Q8TBB1</id>
        <label>LNX1</label>
    </interactant>
    <organismsDiffer>false</organismsDiffer>
    <experiments>3</experiments>
</comment>
<comment type="interaction">
    <interactant intactId="EBI-372578">
        <id>Q9UJ70</id>
    </interactant>
    <interactant intactId="EBI-2864512">
        <id>P50221</id>
        <label>MEOX1</label>
    </interactant>
    <organismsDiffer>false</organismsDiffer>
    <experiments>3</experiments>
</comment>
<comment type="interaction">
    <interactant intactId="EBI-372578">
        <id>Q9UJ70</id>
    </interactant>
    <interactant intactId="EBI-307352">
        <id>Q04864</id>
        <label>REL</label>
    </interactant>
    <organismsDiffer>false</organismsDiffer>
    <experiments>3</experiments>
</comment>
<comment type="interaction">
    <interactant intactId="EBI-372578">
        <id>Q9UJ70</id>
    </interactant>
    <interactant intactId="EBI-727004">
        <id>O00560</id>
        <label>SDCBP</label>
    </interactant>
    <organismsDiffer>false</organismsDiffer>
    <experiments>5</experiments>
</comment>
<comment type="interaction">
    <interactant intactId="EBI-372578">
        <id>Q9UJ70</id>
    </interactant>
    <interactant intactId="EBI-722877">
        <id>Q99081</id>
        <label>TCF12</label>
    </interactant>
    <organismsDiffer>false</organismsDiffer>
    <experiments>3</experiments>
</comment>
<comment type="interaction">
    <interactant intactId="EBI-372578">
        <id>Q9UJ70</id>
    </interactant>
    <interactant intactId="EBI-10175537">
        <id>B2R7W0</id>
    </interactant>
    <organismsDiffer>false</organismsDiffer>
    <experiments>3</experiments>
</comment>
<comment type="interaction">
    <interactant intactId="EBI-372578">
        <id>Q9UJ70</id>
    </interactant>
    <interactant intactId="EBI-48424311">
        <id>P63164</id>
        <label>Snrpn</label>
    </interactant>
    <organismsDiffer>true</organismsDiffer>
    <experiments>4</experiments>
</comment>
<comment type="interaction">
    <interactant intactId="EBI-11526455">
        <id>Q9UJ70-2</id>
    </interactant>
    <interactant intactId="EBI-5653378">
        <id>Q15327</id>
        <label>ANKRD1</label>
    </interactant>
    <organismsDiffer>false</organismsDiffer>
    <experiments>3</experiments>
</comment>
<comment type="interaction">
    <interactant intactId="EBI-11526455">
        <id>Q9UJ70-2</id>
    </interactant>
    <interactant intactId="EBI-718729">
        <id>P55212</id>
        <label>CASP6</label>
    </interactant>
    <organismsDiffer>false</organismsDiffer>
    <experiments>3</experiments>
</comment>
<comment type="interaction">
    <interactant intactId="EBI-11526455">
        <id>Q9UJ70-2</id>
    </interactant>
    <interactant intactId="EBI-6624398">
        <id>P06307</id>
        <label>CCK</label>
    </interactant>
    <organismsDiffer>false</organismsDiffer>
    <experiments>3</experiments>
</comment>
<comment type="interaction">
    <interactant intactId="EBI-11526455">
        <id>Q9UJ70-2</id>
    </interactant>
    <interactant intactId="EBI-711290">
        <id>P42773</id>
        <label>CDKN2C</label>
    </interactant>
    <organismsDiffer>false</organismsDiffer>
    <experiments>3</experiments>
</comment>
<comment type="interaction">
    <interactant intactId="EBI-11526455">
        <id>Q9UJ70-2</id>
    </interactant>
    <interactant intactId="EBI-10186082">
        <id>Q9UI36-2</id>
        <label>DACH1</label>
    </interactant>
    <organismsDiffer>false</organismsDiffer>
    <experiments>3</experiments>
</comment>
<comment type="interaction">
    <interactant intactId="EBI-11526455">
        <id>Q9UJ70-2</id>
    </interactant>
    <interactant intactId="EBI-21591415">
        <id>P13473-2</id>
        <label>LAMP2</label>
    </interactant>
    <organismsDiffer>false</organismsDiffer>
    <experiments>3</experiments>
</comment>
<comment type="interaction">
    <interactant intactId="EBI-11526455">
        <id>Q9UJ70-2</id>
    </interactant>
    <interactant intactId="EBI-8639312">
        <id>P25800</id>
        <label>LMO1</label>
    </interactant>
    <organismsDiffer>false</organismsDiffer>
    <experiments>5</experiments>
</comment>
<comment type="interaction">
    <interactant intactId="EBI-11526455">
        <id>Q9UJ70-2</id>
    </interactant>
    <interactant intactId="EBI-739832">
        <id>Q8TBB1</id>
        <label>LNX1</label>
    </interactant>
    <organismsDiffer>false</organismsDiffer>
    <experiments>3</experiments>
</comment>
<comment type="interaction">
    <interactant intactId="EBI-11526455">
        <id>Q9UJ70-2</id>
    </interactant>
    <interactant intactId="EBI-1058895">
        <id>P13995</id>
        <label>MTHFD2</label>
    </interactant>
    <organismsDiffer>false</organismsDiffer>
    <experiments>3</experiments>
</comment>
<comment type="interaction">
    <interactant intactId="EBI-11526455">
        <id>Q9UJ70-2</id>
    </interactant>
    <interactant intactId="EBI-741158">
        <id>Q96HA8</id>
        <label>NTAQ1</label>
    </interactant>
    <organismsDiffer>false</organismsDiffer>
    <experiments>5</experiments>
</comment>
<comment type="interaction">
    <interactant intactId="EBI-11526455">
        <id>Q9UJ70-2</id>
    </interactant>
    <interactant intactId="EBI-727004">
        <id>O00560</id>
        <label>SDCBP</label>
    </interactant>
    <organismsDiffer>false</organismsDiffer>
    <experiments>3</experiments>
</comment>
<comment type="interaction">
    <interactant intactId="EBI-11526455">
        <id>Q9UJ70-2</id>
    </interactant>
    <interactant intactId="EBI-2623095">
        <id>Q9Y371</id>
        <label>SH3GLB1</label>
    </interactant>
    <organismsDiffer>false</organismsDiffer>
    <experiments>3</experiments>
</comment>
<comment type="alternative products">
    <event type="alternative splicing"/>
    <isoform>
        <id>Q9UJ70-1</id>
        <name>1</name>
        <sequence type="displayed"/>
    </isoform>
    <isoform>
        <id>Q9UJ70-2</id>
        <name>2</name>
        <sequence type="described" ref="VSP_044586"/>
    </isoform>
</comment>
<comment type="tissue specificity">
    <text evidence="2">Ubiquitous.</text>
</comment>
<comment type="similarity">
    <text evidence="12">Belongs to the eukaryotic-type N-acetylglucosamine kinase family.</text>
</comment>
<gene>
    <name evidence="11 14" type="primary">NAGK</name>
</gene>
<evidence type="ECO:0000250" key="1">
    <source>
        <dbReference type="UniProtKB" id="Q9QZ08"/>
    </source>
</evidence>
<evidence type="ECO:0000269" key="2">
    <source>
    </source>
</evidence>
<evidence type="ECO:0000269" key="3">
    <source>
    </source>
</evidence>
<evidence type="ECO:0000269" key="4">
    <source>
    </source>
</evidence>
<evidence type="ECO:0000269" key="5">
    <source>
    </source>
</evidence>
<evidence type="ECO:0000269" key="6">
    <source>
    </source>
</evidence>
<evidence type="ECO:0000269" key="7">
    <source>
    </source>
</evidence>
<evidence type="ECO:0000269" key="8">
    <source>
    </source>
</evidence>
<evidence type="ECO:0000303" key="9">
    <source>
    </source>
</evidence>
<evidence type="ECO:0000303" key="10">
    <source>
    </source>
</evidence>
<evidence type="ECO:0000303" key="11">
    <source>
    </source>
</evidence>
<evidence type="ECO:0000305" key="12"/>
<evidence type="ECO:0000305" key="13">
    <source>
    </source>
</evidence>
<evidence type="ECO:0000312" key="14">
    <source>
        <dbReference type="HGNC" id="HGNC:17174"/>
    </source>
</evidence>
<evidence type="ECO:0007744" key="15">
    <source>
        <dbReference type="PDB" id="2CH5"/>
    </source>
</evidence>
<evidence type="ECO:0007744" key="16">
    <source>
        <dbReference type="PDB" id="2CH6"/>
    </source>
</evidence>
<evidence type="ECO:0007744" key="17">
    <source>
    </source>
</evidence>
<evidence type="ECO:0007744" key="18">
    <source>
    </source>
</evidence>
<evidence type="ECO:0007744" key="19">
    <source>
    </source>
</evidence>
<evidence type="ECO:0007744" key="20">
    <source>
    </source>
</evidence>
<evidence type="ECO:0007744" key="21">
    <source>
    </source>
</evidence>
<evidence type="ECO:0007744" key="22">
    <source>
    </source>
</evidence>
<evidence type="ECO:0007744" key="23">
    <source>
    </source>
</evidence>
<evidence type="ECO:0007829" key="24">
    <source>
        <dbReference type="PDB" id="2CH5"/>
    </source>
</evidence>
<evidence type="ECO:0007829" key="25">
    <source>
        <dbReference type="PDB" id="2CH6"/>
    </source>
</evidence>
<feature type="initiator methionine" description="Removed" evidence="4 20 21">
    <location>
        <position position="1"/>
    </location>
</feature>
<feature type="chain" id="PRO_0000096696" description="N-acetyl-D-glucosamine kinase">
    <location>
        <begin position="2"/>
        <end position="344"/>
    </location>
</feature>
<feature type="binding site" evidence="13 16">
    <location>
        <position position="13"/>
    </location>
    <ligand>
        <name>ATP</name>
        <dbReference type="ChEBI" id="CHEBI:30616"/>
    </ligand>
</feature>
<feature type="binding site" evidence="6 15">
    <location>
        <position position="36"/>
    </location>
    <ligand>
        <name>N-acetyl-D-glucosamine</name>
        <dbReference type="ChEBI" id="CHEBI:506227"/>
    </ligand>
</feature>
<feature type="binding site" evidence="6 15">
    <location>
        <position position="107"/>
    </location>
    <ligand>
        <name>N-acetyl-D-glucosamine</name>
        <dbReference type="ChEBI" id="CHEBI:506227"/>
    </ligand>
</feature>
<feature type="binding site" evidence="13 16">
    <location>
        <position position="127"/>
    </location>
    <ligand>
        <name>ATP</name>
        <dbReference type="ChEBI" id="CHEBI:30616"/>
    </ligand>
</feature>
<feature type="binding site" evidence="6 15">
    <location>
        <begin position="129"/>
        <end position="130"/>
    </location>
    <ligand>
        <name>N-acetyl-D-glucosamine</name>
        <dbReference type="ChEBI" id="CHEBI:506227"/>
    </ligand>
</feature>
<feature type="binding site" evidence="6 15">
    <location>
        <begin position="145"/>
        <end position="147"/>
    </location>
    <ligand>
        <name>N-acetyl-D-glucosamine</name>
        <dbReference type="ChEBI" id="CHEBI:506227"/>
    </ligand>
</feature>
<feature type="binding site" evidence="6 15">
    <location>
        <position position="152"/>
    </location>
    <ligand>
        <name>N-acetyl-D-glucosamine</name>
        <dbReference type="ChEBI" id="CHEBI:506227"/>
    </ligand>
</feature>
<feature type="binding site" evidence="13 16">
    <location>
        <position position="214"/>
    </location>
    <ligand>
        <name>ATP</name>
        <dbReference type="ChEBI" id="CHEBI:30616"/>
    </ligand>
</feature>
<feature type="binding site" evidence="13 16">
    <location>
        <position position="271"/>
    </location>
    <ligand>
        <name>ATP</name>
        <dbReference type="ChEBI" id="CHEBI:30616"/>
    </ligand>
</feature>
<feature type="binding site" evidence="13 16">
    <location>
        <position position="275"/>
    </location>
    <ligand>
        <name>ATP</name>
        <dbReference type="ChEBI" id="CHEBI:30616"/>
    </ligand>
</feature>
<feature type="modified residue" description="N-acetylalanine" evidence="20 21">
    <location>
        <position position="2"/>
    </location>
</feature>
<feature type="modified residue" description="Phosphoserine" evidence="17 18 19 22 23">
    <location>
        <position position="76"/>
    </location>
</feature>
<feature type="modified residue" description="Phosphotyrosine" evidence="3">
    <location>
        <position position="205"/>
    </location>
</feature>
<feature type="splice variant" id="VSP_044586" description="In isoform 2." evidence="10">
    <original>M</original>
    <variation>MRTRTGSQLAAREVTGSGAVPRQLEGRRCQAGRDANGGTSSDGSSSM</variation>
    <location>
        <position position="1"/>
    </location>
</feature>
<feature type="sequence variant" id="VAR_029763" description="In dbSNP:rs17856147." evidence="5">
    <original>W</original>
    <variation>R</variation>
    <location>
        <position position="38"/>
    </location>
</feature>
<feature type="sequence variant" id="VAR_029764" description="In dbSNP:rs17849984." evidence="5">
    <original>A</original>
    <variation>V</variation>
    <location>
        <position position="60"/>
    </location>
</feature>
<feature type="mutagenesis site" description="Abolished ability to phosphorylate muramyl dipeptide." evidence="8">
    <original>D</original>
    <variation>V</variation>
    <location>
        <position position="107"/>
    </location>
</feature>
<feature type="sequence conflict" description="In Ref. 1; CAB61848." evidence="12" ref="1">
    <original>S</original>
    <variation>I</variation>
    <location>
        <position position="70"/>
    </location>
</feature>
<feature type="sequence conflict" description="In Ref. 1; CAB61848." evidence="12" ref="1">
    <original>V</original>
    <variation>I</variation>
    <location>
        <position position="121"/>
    </location>
</feature>
<feature type="sequence conflict" description="In Ref. 4; BAD96365." evidence="12" ref="4">
    <original>C</original>
    <variation>Y</variation>
    <location>
        <position position="211"/>
    </location>
</feature>
<feature type="sequence conflict" description="In Ref. 2; BAA91923." evidence="12" ref="2">
    <original>A</original>
    <variation>V</variation>
    <location>
        <position position="286"/>
    </location>
</feature>
<feature type="sequence conflict" description="In Ref. 2; BAA91923." evidence="12" ref="2">
    <original>G</original>
    <variation>R</variation>
    <location>
        <position position="324"/>
    </location>
</feature>
<feature type="strand" evidence="24">
    <location>
        <begin position="4"/>
        <end position="10"/>
    </location>
</feature>
<feature type="strand" evidence="24">
    <location>
        <begin position="15"/>
        <end position="21"/>
    </location>
</feature>
<feature type="strand" evidence="24">
    <location>
        <begin position="26"/>
        <end position="32"/>
    </location>
</feature>
<feature type="helix" evidence="24">
    <location>
        <begin position="37"/>
        <end position="40"/>
    </location>
</feature>
<feature type="helix" evidence="24">
    <location>
        <begin position="42"/>
        <end position="60"/>
    </location>
</feature>
<feature type="strand" evidence="25">
    <location>
        <begin position="64"/>
        <end position="66"/>
    </location>
</feature>
<feature type="strand" evidence="24">
    <location>
        <begin position="68"/>
        <end position="75"/>
    </location>
</feature>
<feature type="turn" evidence="24">
    <location>
        <begin position="76"/>
        <end position="79"/>
    </location>
</feature>
<feature type="helix" evidence="24">
    <location>
        <begin position="81"/>
        <end position="94"/>
    </location>
</feature>
<feature type="strand" evidence="24">
    <location>
        <begin position="98"/>
        <end position="100"/>
    </location>
</feature>
<feature type="strand" evidence="24">
    <location>
        <begin position="102"/>
        <end position="106"/>
    </location>
</feature>
<feature type="helix" evidence="24">
    <location>
        <begin position="107"/>
        <end position="115"/>
    </location>
</feature>
<feature type="strand" evidence="24">
    <location>
        <begin position="120"/>
        <end position="134"/>
    </location>
</feature>
<feature type="strand" evidence="25">
    <location>
        <begin position="136"/>
        <end position="138"/>
    </location>
</feature>
<feature type="strand" evidence="24">
    <location>
        <begin position="140"/>
        <end position="144"/>
    </location>
</feature>
<feature type="turn" evidence="24">
    <location>
        <begin position="148"/>
        <end position="150"/>
    </location>
</feature>
<feature type="helix" evidence="24">
    <location>
        <begin position="156"/>
        <end position="171"/>
    </location>
</feature>
<feature type="helix" evidence="24">
    <location>
        <begin position="182"/>
        <end position="192"/>
    </location>
</feature>
<feature type="helix" evidence="24">
    <location>
        <begin position="197"/>
        <end position="201"/>
    </location>
</feature>
<feature type="turn" evidence="24">
    <location>
        <begin position="202"/>
        <end position="207"/>
    </location>
</feature>
<feature type="helix" evidence="24">
    <location>
        <begin position="210"/>
        <end position="214"/>
    </location>
</feature>
<feature type="helix" evidence="24">
    <location>
        <begin position="217"/>
        <end position="225"/>
    </location>
</feature>
<feature type="helix" evidence="24">
    <location>
        <begin position="229"/>
        <end position="249"/>
    </location>
</feature>
<feature type="helix" evidence="24">
    <location>
        <begin position="250"/>
        <end position="252"/>
    </location>
</feature>
<feature type="helix" evidence="24">
    <location>
        <begin position="255"/>
        <end position="258"/>
    </location>
</feature>
<feature type="strand" evidence="25">
    <location>
        <begin position="259"/>
        <end position="262"/>
    </location>
</feature>
<feature type="strand" evidence="24">
    <location>
        <begin position="264"/>
        <end position="270"/>
    </location>
</feature>
<feature type="helix" evidence="24">
    <location>
        <begin position="271"/>
        <end position="275"/>
    </location>
</feature>
<feature type="helix" evidence="24">
    <location>
        <begin position="276"/>
        <end position="290"/>
    </location>
</feature>
<feature type="strand" evidence="24">
    <location>
        <begin position="300"/>
        <end position="309"/>
    </location>
</feature>
<feature type="helix" evidence="24">
    <location>
        <begin position="312"/>
        <end position="321"/>
    </location>
</feature>
<feature type="turn" evidence="24">
    <location>
        <begin position="322"/>
        <end position="324"/>
    </location>
</feature>
<feature type="helix" evidence="24">
    <location>
        <begin position="331"/>
        <end position="334"/>
    </location>
</feature>
<feature type="strand" evidence="24">
    <location>
        <begin position="335"/>
        <end position="342"/>
    </location>
</feature>
<sequence length="344" mass="37376">MAAIYGGVEGGGTRSEVLLVSEDGKILAEADGLSTNHWLIGTDKCVERINEMVNRAKRKAGVDPLVPLRSLGLSLSGGDQEDAGRILIEELRDRFPYLSESYLITTDAAGSIATATPDGGVVLISGTGSNCRLINPDGSESGCGGWGHMMGDEGSAYWIAHQAVKIVFDSIDNLEAAPHDIGYVKQAMFHYFQVPDRLGILTHLYRDFDKCRFAGFCRKIAEGAQQGDPLSRYIFRKAGEMLGRHIVAVLPEIDPVLFQGKIGLPILCVGSVWKSWELLKEGFLLALTQGREIQAQNFFSSFTLMKLRHSSALGGASLGARHIGHLLPMDYSANAIAFYSYTFS</sequence>
<name>NAGK_HUMAN</name>
<reference key="1">
    <citation type="journal article" date="2000" name="Eur. J. Biochem.">
        <title>Molecular cloning and characterization of murine and human N-acetylglucosamine kinase.</title>
        <authorList>
            <person name="Hinderlich S."/>
            <person name="Berger M."/>
            <person name="Schwarzkopf M."/>
            <person name="Effertz K."/>
            <person name="Reutter W."/>
        </authorList>
    </citation>
    <scope>NUCLEOTIDE SEQUENCE [MRNA] (ISOFORM 1)</scope>
    <scope>TISSUE SPECIFICITY</scope>
</reference>
<reference key="2">
    <citation type="journal article" date="2004" name="Nat. Genet.">
        <title>Complete sequencing and characterization of 21,243 full-length human cDNAs.</title>
        <authorList>
            <person name="Ota T."/>
            <person name="Suzuki Y."/>
            <person name="Nishikawa T."/>
            <person name="Otsuki T."/>
            <person name="Sugiyama T."/>
            <person name="Irie R."/>
            <person name="Wakamatsu A."/>
            <person name="Hayashi K."/>
            <person name="Sato H."/>
            <person name="Nagai K."/>
            <person name="Kimura K."/>
            <person name="Makita H."/>
            <person name="Sekine M."/>
            <person name="Obayashi M."/>
            <person name="Nishi T."/>
            <person name="Shibahara T."/>
            <person name="Tanaka T."/>
            <person name="Ishii S."/>
            <person name="Yamamoto J."/>
            <person name="Saito K."/>
            <person name="Kawai Y."/>
            <person name="Isono Y."/>
            <person name="Nakamura Y."/>
            <person name="Nagahari K."/>
            <person name="Murakami K."/>
            <person name="Yasuda T."/>
            <person name="Iwayanagi T."/>
            <person name="Wagatsuma M."/>
            <person name="Shiratori A."/>
            <person name="Sudo H."/>
            <person name="Hosoiri T."/>
            <person name="Kaku Y."/>
            <person name="Kodaira H."/>
            <person name="Kondo H."/>
            <person name="Sugawara M."/>
            <person name="Takahashi M."/>
            <person name="Kanda K."/>
            <person name="Yokoi T."/>
            <person name="Furuya T."/>
            <person name="Kikkawa E."/>
            <person name="Omura Y."/>
            <person name="Abe K."/>
            <person name="Kamihara K."/>
            <person name="Katsuta N."/>
            <person name="Sato K."/>
            <person name="Tanikawa M."/>
            <person name="Yamazaki M."/>
            <person name="Ninomiya K."/>
            <person name="Ishibashi T."/>
            <person name="Yamashita H."/>
            <person name="Murakawa K."/>
            <person name="Fujimori K."/>
            <person name="Tanai H."/>
            <person name="Kimata M."/>
            <person name="Watanabe M."/>
            <person name="Hiraoka S."/>
            <person name="Chiba Y."/>
            <person name="Ishida S."/>
            <person name="Ono Y."/>
            <person name="Takiguchi S."/>
            <person name="Watanabe S."/>
            <person name="Yosida M."/>
            <person name="Hotuta T."/>
            <person name="Kusano J."/>
            <person name="Kanehori K."/>
            <person name="Takahashi-Fujii A."/>
            <person name="Hara H."/>
            <person name="Tanase T.-O."/>
            <person name="Nomura Y."/>
            <person name="Togiya S."/>
            <person name="Komai F."/>
            <person name="Hara R."/>
            <person name="Takeuchi K."/>
            <person name="Arita M."/>
            <person name="Imose N."/>
            <person name="Musashino K."/>
            <person name="Yuuki H."/>
            <person name="Oshima A."/>
            <person name="Sasaki N."/>
            <person name="Aotsuka S."/>
            <person name="Yoshikawa Y."/>
            <person name="Matsunawa H."/>
            <person name="Ichihara T."/>
            <person name="Shiohata N."/>
            <person name="Sano S."/>
            <person name="Moriya S."/>
            <person name="Momiyama H."/>
            <person name="Satoh N."/>
            <person name="Takami S."/>
            <person name="Terashima Y."/>
            <person name="Suzuki O."/>
            <person name="Nakagawa S."/>
            <person name="Senoh A."/>
            <person name="Mizoguchi H."/>
            <person name="Goto Y."/>
            <person name="Shimizu F."/>
            <person name="Wakebe H."/>
            <person name="Hishigaki H."/>
            <person name="Watanabe T."/>
            <person name="Sugiyama A."/>
            <person name="Takemoto M."/>
            <person name="Kawakami B."/>
            <person name="Yamazaki M."/>
            <person name="Watanabe K."/>
            <person name="Kumagai A."/>
            <person name="Itakura S."/>
            <person name="Fukuzumi Y."/>
            <person name="Fujimori Y."/>
            <person name="Komiyama M."/>
            <person name="Tashiro H."/>
            <person name="Tanigami A."/>
            <person name="Fujiwara T."/>
            <person name="Ono T."/>
            <person name="Yamada K."/>
            <person name="Fujii Y."/>
            <person name="Ozaki K."/>
            <person name="Hirao M."/>
            <person name="Ohmori Y."/>
            <person name="Kawabata A."/>
            <person name="Hikiji T."/>
            <person name="Kobatake N."/>
            <person name="Inagaki H."/>
            <person name="Ikema Y."/>
            <person name="Okamoto S."/>
            <person name="Okitani R."/>
            <person name="Kawakami T."/>
            <person name="Noguchi S."/>
            <person name="Itoh T."/>
            <person name="Shigeta K."/>
            <person name="Senba T."/>
            <person name="Matsumura K."/>
            <person name="Nakajima Y."/>
            <person name="Mizuno T."/>
            <person name="Morinaga M."/>
            <person name="Sasaki M."/>
            <person name="Togashi T."/>
            <person name="Oyama M."/>
            <person name="Hata H."/>
            <person name="Watanabe M."/>
            <person name="Komatsu T."/>
            <person name="Mizushima-Sugano J."/>
            <person name="Satoh T."/>
            <person name="Shirai Y."/>
            <person name="Takahashi Y."/>
            <person name="Nakagawa K."/>
            <person name="Okumura K."/>
            <person name="Nagase T."/>
            <person name="Nomura N."/>
            <person name="Kikuchi H."/>
            <person name="Masuho Y."/>
            <person name="Yamashita R."/>
            <person name="Nakai K."/>
            <person name="Yada T."/>
            <person name="Nakamura Y."/>
            <person name="Ohara O."/>
            <person name="Isogai T."/>
            <person name="Sugano S."/>
        </authorList>
    </citation>
    <scope>NUCLEOTIDE SEQUENCE [LARGE SCALE MRNA] (ISOFORMS 1 AND 2)</scope>
    <source>
        <tissue>Brain</tissue>
        <tissue>Placenta</tissue>
    </source>
</reference>
<reference key="3">
    <citation type="submission" date="2004-06" db="EMBL/GenBank/DDBJ databases">
        <title>Cloning of human full open reading frames in Gateway(TM) system entry vector (pDONR201).</title>
        <authorList>
            <person name="Ebert L."/>
            <person name="Schick M."/>
            <person name="Neubert P."/>
            <person name="Schatten R."/>
            <person name="Henze S."/>
            <person name="Korn B."/>
        </authorList>
    </citation>
    <scope>NUCLEOTIDE SEQUENCE [LARGE SCALE MRNA] (ISOFORM 1)</scope>
</reference>
<reference key="4">
    <citation type="submission" date="2005-04" db="EMBL/GenBank/DDBJ databases">
        <authorList>
            <person name="Suzuki Y."/>
            <person name="Sugano S."/>
            <person name="Totoki Y."/>
            <person name="Toyoda A."/>
            <person name="Takeda T."/>
            <person name="Sakaki Y."/>
            <person name="Tanaka A."/>
            <person name="Yokoyama S."/>
        </authorList>
    </citation>
    <scope>NUCLEOTIDE SEQUENCE [LARGE SCALE MRNA] (ISOFORM 1)</scope>
    <source>
        <tissue>Cerebellum</tissue>
    </source>
</reference>
<reference key="5">
    <citation type="journal article" date="2005" name="Nature">
        <title>Generation and annotation of the DNA sequences of human chromosomes 2 and 4.</title>
        <authorList>
            <person name="Hillier L.W."/>
            <person name="Graves T.A."/>
            <person name="Fulton R.S."/>
            <person name="Fulton L.A."/>
            <person name="Pepin K.H."/>
            <person name="Minx P."/>
            <person name="Wagner-McPherson C."/>
            <person name="Layman D."/>
            <person name="Wylie K."/>
            <person name="Sekhon M."/>
            <person name="Becker M.C."/>
            <person name="Fewell G.A."/>
            <person name="Delehaunty K.D."/>
            <person name="Miner T.L."/>
            <person name="Nash W.E."/>
            <person name="Kremitzki C."/>
            <person name="Oddy L."/>
            <person name="Du H."/>
            <person name="Sun H."/>
            <person name="Bradshaw-Cordum H."/>
            <person name="Ali J."/>
            <person name="Carter J."/>
            <person name="Cordes M."/>
            <person name="Harris A."/>
            <person name="Isak A."/>
            <person name="van Brunt A."/>
            <person name="Nguyen C."/>
            <person name="Du F."/>
            <person name="Courtney L."/>
            <person name="Kalicki J."/>
            <person name="Ozersky P."/>
            <person name="Abbott S."/>
            <person name="Armstrong J."/>
            <person name="Belter E.A."/>
            <person name="Caruso L."/>
            <person name="Cedroni M."/>
            <person name="Cotton M."/>
            <person name="Davidson T."/>
            <person name="Desai A."/>
            <person name="Elliott G."/>
            <person name="Erb T."/>
            <person name="Fronick C."/>
            <person name="Gaige T."/>
            <person name="Haakenson W."/>
            <person name="Haglund K."/>
            <person name="Holmes A."/>
            <person name="Harkins R."/>
            <person name="Kim K."/>
            <person name="Kruchowski S.S."/>
            <person name="Strong C.M."/>
            <person name="Grewal N."/>
            <person name="Goyea E."/>
            <person name="Hou S."/>
            <person name="Levy A."/>
            <person name="Martinka S."/>
            <person name="Mead K."/>
            <person name="McLellan M.D."/>
            <person name="Meyer R."/>
            <person name="Randall-Maher J."/>
            <person name="Tomlinson C."/>
            <person name="Dauphin-Kohlberg S."/>
            <person name="Kozlowicz-Reilly A."/>
            <person name="Shah N."/>
            <person name="Swearengen-Shahid S."/>
            <person name="Snider J."/>
            <person name="Strong J.T."/>
            <person name="Thompson J."/>
            <person name="Yoakum M."/>
            <person name="Leonard S."/>
            <person name="Pearman C."/>
            <person name="Trani L."/>
            <person name="Radionenko M."/>
            <person name="Waligorski J.E."/>
            <person name="Wang C."/>
            <person name="Rock S.M."/>
            <person name="Tin-Wollam A.-M."/>
            <person name="Maupin R."/>
            <person name="Latreille P."/>
            <person name="Wendl M.C."/>
            <person name="Yang S.-P."/>
            <person name="Pohl C."/>
            <person name="Wallis J.W."/>
            <person name="Spieth J."/>
            <person name="Bieri T.A."/>
            <person name="Berkowicz N."/>
            <person name="Nelson J.O."/>
            <person name="Osborne J."/>
            <person name="Ding L."/>
            <person name="Meyer R."/>
            <person name="Sabo A."/>
            <person name="Shotland Y."/>
            <person name="Sinha P."/>
            <person name="Wohldmann P.E."/>
            <person name="Cook L.L."/>
            <person name="Hickenbotham M.T."/>
            <person name="Eldred J."/>
            <person name="Williams D."/>
            <person name="Jones T.A."/>
            <person name="She X."/>
            <person name="Ciccarelli F.D."/>
            <person name="Izaurralde E."/>
            <person name="Taylor J."/>
            <person name="Schmutz J."/>
            <person name="Myers R.M."/>
            <person name="Cox D.R."/>
            <person name="Huang X."/>
            <person name="McPherson J.D."/>
            <person name="Mardis E.R."/>
            <person name="Clifton S.W."/>
            <person name="Warren W.C."/>
            <person name="Chinwalla A.T."/>
            <person name="Eddy S.R."/>
            <person name="Marra M.A."/>
            <person name="Ovcharenko I."/>
            <person name="Furey T.S."/>
            <person name="Miller W."/>
            <person name="Eichler E.E."/>
            <person name="Bork P."/>
            <person name="Suyama M."/>
            <person name="Torrents D."/>
            <person name="Waterston R.H."/>
            <person name="Wilson R.K."/>
        </authorList>
    </citation>
    <scope>NUCLEOTIDE SEQUENCE [LARGE SCALE GENOMIC DNA]</scope>
</reference>
<reference key="6">
    <citation type="submission" date="2005-09" db="EMBL/GenBank/DDBJ databases">
        <authorList>
            <person name="Mural R.J."/>
            <person name="Istrail S."/>
            <person name="Sutton G.G."/>
            <person name="Florea L."/>
            <person name="Halpern A.L."/>
            <person name="Mobarry C.M."/>
            <person name="Lippert R."/>
            <person name="Walenz B."/>
            <person name="Shatkay H."/>
            <person name="Dew I."/>
            <person name="Miller J.R."/>
            <person name="Flanigan M.J."/>
            <person name="Edwards N.J."/>
            <person name="Bolanos R."/>
            <person name="Fasulo D."/>
            <person name="Halldorsson B.V."/>
            <person name="Hannenhalli S."/>
            <person name="Turner R."/>
            <person name="Yooseph S."/>
            <person name="Lu F."/>
            <person name="Nusskern D.R."/>
            <person name="Shue B.C."/>
            <person name="Zheng X.H."/>
            <person name="Zhong F."/>
            <person name="Delcher A.L."/>
            <person name="Huson D.H."/>
            <person name="Kravitz S.A."/>
            <person name="Mouchard L."/>
            <person name="Reinert K."/>
            <person name="Remington K.A."/>
            <person name="Clark A.G."/>
            <person name="Waterman M.S."/>
            <person name="Eichler E.E."/>
            <person name="Adams M.D."/>
            <person name="Hunkapiller M.W."/>
            <person name="Myers E.W."/>
            <person name="Venter J.C."/>
        </authorList>
    </citation>
    <scope>NUCLEOTIDE SEQUENCE [LARGE SCALE GENOMIC DNA]</scope>
</reference>
<reference key="7">
    <citation type="journal article" date="2004" name="Genome Res.">
        <title>The status, quality, and expansion of the NIH full-length cDNA project: the Mammalian Gene Collection (MGC).</title>
        <authorList>
            <consortium name="The MGC Project Team"/>
        </authorList>
    </citation>
    <scope>NUCLEOTIDE SEQUENCE [LARGE SCALE MRNA] (ISOFORM 1)</scope>
    <scope>VARIANTS ARG-38 AND VAL-60</scope>
    <source>
        <tissue>Kidney</tissue>
        <tissue>Skin</tissue>
    </source>
</reference>
<reference key="8">
    <citation type="journal article" date="2003" name="Nat. Biotechnol.">
        <title>Exploring proteomes and analyzing protein processing by mass spectrometric identification of sorted N-terminal peptides.</title>
        <authorList>
            <person name="Gevaert K."/>
            <person name="Goethals M."/>
            <person name="Martens L."/>
            <person name="Van Damme J."/>
            <person name="Staes A."/>
            <person name="Thomas G.R."/>
            <person name="Vandekerckhove J."/>
        </authorList>
    </citation>
    <scope>PROTEIN SEQUENCE OF 2-14</scope>
    <source>
        <tissue>Platelet</tissue>
    </source>
</reference>
<reference key="9">
    <citation type="submission" date="2007-03" db="UniProtKB">
        <authorList>
            <person name="Lubec G."/>
            <person name="Afjehi-Sadat L."/>
        </authorList>
    </citation>
    <scope>PROTEIN SEQUENCE OF 245-261 AND 281-291</scope>
    <scope>IDENTIFICATION BY MASS SPECTROMETRY</scope>
    <source>
        <tissue>Brain</tissue>
        <tissue>Cajal-Retzius cell</tissue>
    </source>
</reference>
<reference key="10">
    <citation type="journal article" date="2002" name="Proteomics">
        <title>Identification of the phosphotyrosine proteome from thrombin activated platelets.</title>
        <authorList>
            <person name="Maguire P.B."/>
            <person name="Wynne K.J."/>
            <person name="Harney D.F."/>
            <person name="O'Donoghue N.M."/>
            <person name="Stephens G."/>
            <person name="Fitzgerald D.J."/>
        </authorList>
    </citation>
    <scope>PHOSPHORYLATION AT TYR-205</scope>
</reference>
<reference key="11">
    <citation type="journal article" date="2008" name="Proc. Natl. Acad. Sci. U.S.A.">
        <title>A quantitative atlas of mitotic phosphorylation.</title>
        <authorList>
            <person name="Dephoure N."/>
            <person name="Zhou C."/>
            <person name="Villen J."/>
            <person name="Beausoleil S.A."/>
            <person name="Bakalarski C.E."/>
            <person name="Elledge S.J."/>
            <person name="Gygi S.P."/>
        </authorList>
    </citation>
    <scope>PHOSPHORYLATION [LARGE SCALE ANALYSIS] AT SER-76</scope>
    <scope>IDENTIFICATION BY MASS SPECTROMETRY [LARGE SCALE ANALYSIS]</scope>
    <source>
        <tissue>Cervix carcinoma</tissue>
    </source>
</reference>
<reference key="12">
    <citation type="journal article" date="2009" name="Sci. Signal.">
        <title>Quantitative phosphoproteomic analysis of T cell receptor signaling reveals system-wide modulation of protein-protein interactions.</title>
        <authorList>
            <person name="Mayya V."/>
            <person name="Lundgren D.H."/>
            <person name="Hwang S.-I."/>
            <person name="Rezaul K."/>
            <person name="Wu L."/>
            <person name="Eng J.K."/>
            <person name="Rodionov V."/>
            <person name="Han D.K."/>
        </authorList>
    </citation>
    <scope>PHOSPHORYLATION [LARGE SCALE ANALYSIS] AT SER-76</scope>
    <scope>IDENTIFICATION BY MASS SPECTROMETRY [LARGE SCALE ANALYSIS]</scope>
    <source>
        <tissue>Leukemic T-cell</tissue>
    </source>
</reference>
<reference key="13">
    <citation type="journal article" date="2010" name="Sci. Signal.">
        <title>Quantitative phosphoproteomics reveals widespread full phosphorylation site occupancy during mitosis.</title>
        <authorList>
            <person name="Olsen J.V."/>
            <person name="Vermeulen M."/>
            <person name="Santamaria A."/>
            <person name="Kumar C."/>
            <person name="Miller M.L."/>
            <person name="Jensen L.J."/>
            <person name="Gnad F."/>
            <person name="Cox J."/>
            <person name="Jensen T.S."/>
            <person name="Nigg E.A."/>
            <person name="Brunak S."/>
            <person name="Mann M."/>
        </authorList>
    </citation>
    <scope>PHOSPHORYLATION [LARGE SCALE ANALYSIS] AT SER-76</scope>
    <scope>IDENTIFICATION BY MASS SPECTROMETRY [LARGE SCALE ANALYSIS]</scope>
    <source>
        <tissue>Cervix carcinoma</tissue>
    </source>
</reference>
<reference key="14">
    <citation type="journal article" date="2011" name="BMC Syst. Biol.">
        <title>Initial characterization of the human central proteome.</title>
        <authorList>
            <person name="Burkard T.R."/>
            <person name="Planyavsky M."/>
            <person name="Kaupe I."/>
            <person name="Breitwieser F.P."/>
            <person name="Buerckstuemmer T."/>
            <person name="Bennett K.L."/>
            <person name="Superti-Furga G."/>
            <person name="Colinge J."/>
        </authorList>
    </citation>
    <scope>IDENTIFICATION BY MASS SPECTROMETRY [LARGE SCALE ANALYSIS]</scope>
</reference>
<reference key="15">
    <citation type="journal article" date="2012" name="J. Biol. Chem.">
        <title>Metabolism of vertebrate amino sugars with N-glycolyl groups: elucidating the intracellular fate of the non-human sialic acid N-glycolylneuraminic acid.</title>
        <authorList>
            <person name="Bergfeld A.K."/>
            <person name="Pearce O.M."/>
            <person name="Diaz S.L."/>
            <person name="Pham T."/>
            <person name="Varki A."/>
        </authorList>
    </citation>
    <scope>FUNCTION</scope>
    <scope>CATALYTIC ACTIVITY</scope>
    <scope>PATHWAY</scope>
</reference>
<reference key="16">
    <citation type="journal article" date="2012" name="Mol. Cell. Proteomics">
        <title>Comparative large-scale characterisation of plant vs. mammal proteins reveals similar and idiosyncratic N-alpha acetylation features.</title>
        <authorList>
            <person name="Bienvenut W.V."/>
            <person name="Sumpton D."/>
            <person name="Martinez A."/>
            <person name="Lilla S."/>
            <person name="Espagne C."/>
            <person name="Meinnel T."/>
            <person name="Giglione C."/>
        </authorList>
    </citation>
    <scope>ACETYLATION [LARGE SCALE ANALYSIS] AT ALA-2</scope>
    <scope>CLEAVAGE OF INITIATOR METHIONINE [LARGE SCALE ANALYSIS]</scope>
    <scope>IDENTIFICATION BY MASS SPECTROMETRY [LARGE SCALE ANALYSIS]</scope>
</reference>
<reference key="17">
    <citation type="journal article" date="2012" name="Proc. Natl. Acad. Sci. U.S.A.">
        <title>N-terminal acetylome analyses and functional insights of the N-terminal acetyltransferase NatB.</title>
        <authorList>
            <person name="Van Damme P."/>
            <person name="Lasa M."/>
            <person name="Polevoda B."/>
            <person name="Gazquez C."/>
            <person name="Elosegui-Artola A."/>
            <person name="Kim D.S."/>
            <person name="De Juan-Pardo E."/>
            <person name="Demeyer K."/>
            <person name="Hole K."/>
            <person name="Larrea E."/>
            <person name="Timmerman E."/>
            <person name="Prieto J."/>
            <person name="Arnesen T."/>
            <person name="Sherman F."/>
            <person name="Gevaert K."/>
            <person name="Aldabe R."/>
        </authorList>
    </citation>
    <scope>ACETYLATION [LARGE SCALE ANALYSIS] AT ALA-2</scope>
    <scope>CLEAVAGE OF INITIATOR METHIONINE [LARGE SCALE ANALYSIS]</scope>
    <scope>IDENTIFICATION BY MASS SPECTROMETRY [LARGE SCALE ANALYSIS]</scope>
</reference>
<reference key="18">
    <citation type="journal article" date="2013" name="J. Proteome Res.">
        <title>Toward a comprehensive characterization of a human cancer cell phosphoproteome.</title>
        <authorList>
            <person name="Zhou H."/>
            <person name="Di Palma S."/>
            <person name="Preisinger C."/>
            <person name="Peng M."/>
            <person name="Polat A.N."/>
            <person name="Heck A.J."/>
            <person name="Mohammed S."/>
        </authorList>
    </citation>
    <scope>PHOSPHORYLATION [LARGE SCALE ANALYSIS] AT SER-76</scope>
    <scope>IDENTIFICATION BY MASS SPECTROMETRY [LARGE SCALE ANALYSIS]</scope>
    <source>
        <tissue>Cervix carcinoma</tissue>
        <tissue>Erythroleukemia</tissue>
    </source>
</reference>
<reference key="19">
    <citation type="journal article" date="2014" name="J. Proteomics">
        <title>An enzyme assisted RP-RPLC approach for in-depth analysis of human liver phosphoproteome.</title>
        <authorList>
            <person name="Bian Y."/>
            <person name="Song C."/>
            <person name="Cheng K."/>
            <person name="Dong M."/>
            <person name="Wang F."/>
            <person name="Huang J."/>
            <person name="Sun D."/>
            <person name="Wang L."/>
            <person name="Ye M."/>
            <person name="Zou H."/>
        </authorList>
    </citation>
    <scope>PHOSPHORYLATION [LARGE SCALE ANALYSIS] AT SER-76</scope>
    <scope>IDENTIFICATION BY MASS SPECTROMETRY [LARGE SCALE ANALYSIS]</scope>
    <source>
        <tissue>Liver</tissue>
    </source>
</reference>
<reference key="20">
    <citation type="journal article" date="2022" name="Nature">
        <title>Phosphorylation of muramyl peptides by NAGK is required for NOD2 activation.</title>
        <authorList>
            <person name="Stafford C.A."/>
            <person name="Gassauer A.M."/>
            <person name="de Oliveira Mann C.C."/>
            <person name="Tanzer M.C."/>
            <person name="Fessler E."/>
            <person name="Wefers B."/>
            <person name="Nagl D."/>
            <person name="Kuut G."/>
            <person name="Sulek K."/>
            <person name="Vasilopoulou C."/>
            <person name="Schwojer S.J."/>
            <person name="Wiest A."/>
            <person name="Pfautsch M.K."/>
            <person name="Wurst W."/>
            <person name="Yabal M."/>
            <person name="Froehlich T."/>
            <person name="Mann M."/>
            <person name="Gisch N."/>
            <person name="Jae L.T."/>
            <person name="Hornung V."/>
        </authorList>
    </citation>
    <scope>FUNCTION</scope>
    <scope>CATALYTIC ACTIVITY</scope>
    <scope>MUTAGENESIS OF ASP-107</scope>
</reference>
<reference key="21">
    <citation type="journal article" date="2006" name="J. Mol. Biol.">
        <title>Structures of human N-acetylglucosamine kinase in two complexes with N-acetylglucosamine and with ADP/glucose: insights into substrate specificity and regulation.</title>
        <authorList>
            <person name="Weihofen W.A."/>
            <person name="Berger M."/>
            <person name="Chen H."/>
            <person name="Saenger W."/>
            <person name="Hinderlich S."/>
        </authorList>
    </citation>
    <scope>X-RAY CRYSTALLOGRAPHY (1.9 ANGSTROMS) OF 1-345 IN COMPLEXES WITH SUBSTRATE; GLUCOSE AND ADP</scope>
    <scope>SUBUNIT</scope>
</reference>
<dbReference type="EC" id="2.7.1.59" evidence="2 7"/>
<dbReference type="EC" id="2.7.1.-" evidence="8"/>
<dbReference type="EC" id="2.7.1.60" evidence="1"/>
<dbReference type="EMBL" id="AJ242910">
    <property type="protein sequence ID" value="CAB61848.1"/>
    <property type="molecule type" value="mRNA"/>
</dbReference>
<dbReference type="EMBL" id="AK001812">
    <property type="protein sequence ID" value="BAA91923.1"/>
    <property type="molecule type" value="mRNA"/>
</dbReference>
<dbReference type="EMBL" id="AK297224">
    <property type="protein sequence ID" value="BAG59707.1"/>
    <property type="molecule type" value="mRNA"/>
</dbReference>
<dbReference type="EMBL" id="CR457271">
    <property type="protein sequence ID" value="CAG33552.1"/>
    <property type="molecule type" value="mRNA"/>
</dbReference>
<dbReference type="EMBL" id="AK222645">
    <property type="protein sequence ID" value="BAD96365.1"/>
    <property type="molecule type" value="mRNA"/>
</dbReference>
<dbReference type="EMBL" id="AC007881">
    <property type="protein sequence ID" value="AAY14748.1"/>
    <property type="molecule type" value="Genomic_DNA"/>
</dbReference>
<dbReference type="EMBL" id="CH471053">
    <property type="protein sequence ID" value="EAW99780.1"/>
    <property type="molecule type" value="Genomic_DNA"/>
</dbReference>
<dbReference type="EMBL" id="BC001029">
    <property type="protein sequence ID" value="AAH01029.1"/>
    <property type="molecule type" value="mRNA"/>
</dbReference>
<dbReference type="EMBL" id="BC005371">
    <property type="protein sequence ID" value="AAH05371.1"/>
    <property type="molecule type" value="mRNA"/>
</dbReference>
<dbReference type="CCDS" id="CCDS33220.3">
    <molecule id="Q9UJ70-1"/>
</dbReference>
<dbReference type="RefSeq" id="NP_060037.3">
    <molecule id="Q9UJ70-1"/>
    <property type="nucleotide sequence ID" value="NM_017567.4"/>
</dbReference>
<dbReference type="PDB" id="2CH5">
    <property type="method" value="X-ray"/>
    <property type="resolution" value="1.90 A"/>
    <property type="chains" value="A/B/C/D=1-344"/>
</dbReference>
<dbReference type="PDB" id="2CH6">
    <property type="method" value="X-ray"/>
    <property type="resolution" value="2.72 A"/>
    <property type="chains" value="A/B/C/D=1-344"/>
</dbReference>
<dbReference type="PDBsum" id="2CH5"/>
<dbReference type="PDBsum" id="2CH6"/>
<dbReference type="SMR" id="Q9UJ70"/>
<dbReference type="BioGRID" id="120728">
    <property type="interactions" value="186"/>
</dbReference>
<dbReference type="FunCoup" id="Q9UJ70">
    <property type="interactions" value="829"/>
</dbReference>
<dbReference type="IntAct" id="Q9UJ70">
    <property type="interactions" value="120"/>
</dbReference>
<dbReference type="MINT" id="Q9UJ70"/>
<dbReference type="STRING" id="9606.ENSP00000477639"/>
<dbReference type="ChEMBL" id="CHEMBL4295978"/>
<dbReference type="DrugBank" id="DB00141">
    <property type="generic name" value="N-Acetylglucosamine"/>
</dbReference>
<dbReference type="GlyGen" id="Q9UJ70">
    <property type="glycosylation" value="1 site, 1 O-linked glycan (1 site)"/>
</dbReference>
<dbReference type="iPTMnet" id="Q9UJ70"/>
<dbReference type="PhosphoSitePlus" id="Q9UJ70"/>
<dbReference type="SwissPalm" id="Q9UJ70"/>
<dbReference type="BioMuta" id="NAGK"/>
<dbReference type="DMDM" id="24638065"/>
<dbReference type="OGP" id="Q9UJ70"/>
<dbReference type="CPTAC" id="CPTAC-242"/>
<dbReference type="CPTAC" id="CPTAC-243"/>
<dbReference type="jPOST" id="Q9UJ70"/>
<dbReference type="MassIVE" id="Q9UJ70"/>
<dbReference type="PaxDb" id="9606-ENSP00000477639"/>
<dbReference type="PeptideAtlas" id="Q9UJ70"/>
<dbReference type="ProteomicsDB" id="84593">
    <molecule id="Q9UJ70-1"/>
</dbReference>
<dbReference type="Pumba" id="Q9UJ70"/>
<dbReference type="Antibodypedia" id="31185">
    <property type="antibodies" value="297 antibodies from 27 providers"/>
</dbReference>
<dbReference type="DNASU" id="55577"/>
<dbReference type="Ensembl" id="ENST00000244204.11">
    <molecule id="Q9UJ70-1"/>
    <property type="protein sequence ID" value="ENSP00000244204.5"/>
    <property type="gene ID" value="ENSG00000124357.13"/>
</dbReference>
<dbReference type="Ensembl" id="ENST00000455662.6">
    <molecule id="Q9UJ70-2"/>
    <property type="protein sequence ID" value="ENSP00000389087.2"/>
    <property type="gene ID" value="ENSG00000124357.13"/>
</dbReference>
<dbReference type="Ensembl" id="ENST00000613852.4">
    <molecule id="Q9UJ70-2"/>
    <property type="protein sequence ID" value="ENSP00000477639.1"/>
    <property type="gene ID" value="ENSG00000124357.13"/>
</dbReference>
<dbReference type="GeneID" id="55577"/>
<dbReference type="KEGG" id="hsa:55577"/>
<dbReference type="MANE-Select" id="ENST00000244204.11">
    <property type="protein sequence ID" value="ENSP00000244204.5"/>
    <property type="RefSeq nucleotide sequence ID" value="NM_017567.6"/>
    <property type="RefSeq protein sequence ID" value="NP_060037.4"/>
</dbReference>
<dbReference type="UCSC" id="uc002shp.4">
    <molecule id="Q9UJ70-1"/>
    <property type="organism name" value="human"/>
</dbReference>
<dbReference type="AGR" id="HGNC:17174"/>
<dbReference type="CTD" id="55577"/>
<dbReference type="DisGeNET" id="55577"/>
<dbReference type="GeneCards" id="NAGK"/>
<dbReference type="HGNC" id="HGNC:17174">
    <property type="gene designation" value="NAGK"/>
</dbReference>
<dbReference type="HPA" id="ENSG00000124357">
    <property type="expression patterns" value="Low tissue specificity"/>
</dbReference>
<dbReference type="MIM" id="606828">
    <property type="type" value="gene"/>
</dbReference>
<dbReference type="neXtProt" id="NX_Q9UJ70"/>
<dbReference type="OpenTargets" id="ENSG00000124357"/>
<dbReference type="PharmGKB" id="PA31436"/>
<dbReference type="VEuPathDB" id="HostDB:ENSG00000124357"/>
<dbReference type="eggNOG" id="KOG1794">
    <property type="taxonomic scope" value="Eukaryota"/>
</dbReference>
<dbReference type="GeneTree" id="ENSGT00510000047418"/>
<dbReference type="InParanoid" id="Q9UJ70"/>
<dbReference type="OrthoDB" id="311172at2759"/>
<dbReference type="PAN-GO" id="Q9UJ70">
    <property type="GO annotations" value="1 GO annotation based on evolutionary models"/>
</dbReference>
<dbReference type="PhylomeDB" id="Q9UJ70"/>
<dbReference type="TreeFam" id="TF314158"/>
<dbReference type="BRENDA" id="2.7.1.59">
    <property type="organism ID" value="2681"/>
</dbReference>
<dbReference type="PathwayCommons" id="Q9UJ70"/>
<dbReference type="Reactome" id="R-HSA-446210">
    <property type="pathway name" value="Synthesis of UDP-N-acetyl-glucosamine"/>
</dbReference>
<dbReference type="SABIO-RK" id="Q9UJ70"/>
<dbReference type="SignaLink" id="Q9UJ70"/>
<dbReference type="UniPathway" id="UPA00629"/>
<dbReference type="BioGRID-ORCS" id="55577">
    <property type="hits" value="17 hits in 1161 CRISPR screens"/>
</dbReference>
<dbReference type="CD-CODE" id="804901D1">
    <property type="entry name" value="Nuclear speckle"/>
</dbReference>
<dbReference type="ChiTaRS" id="NAGK">
    <property type="organism name" value="human"/>
</dbReference>
<dbReference type="EvolutionaryTrace" id="Q9UJ70"/>
<dbReference type="GeneWiki" id="NAGK"/>
<dbReference type="GenomeRNAi" id="55577"/>
<dbReference type="Pharos" id="Q9UJ70">
    <property type="development level" value="Tbio"/>
</dbReference>
<dbReference type="PRO" id="PR:Q9UJ70"/>
<dbReference type="Proteomes" id="UP000005640">
    <property type="component" value="Chromosome 2"/>
</dbReference>
<dbReference type="RNAct" id="Q9UJ70">
    <property type="molecule type" value="protein"/>
</dbReference>
<dbReference type="Bgee" id="ENSG00000124357">
    <property type="expression patterns" value="Expressed in monocyte and 197 other cell types or tissues"/>
</dbReference>
<dbReference type="ExpressionAtlas" id="Q9UJ70">
    <property type="expression patterns" value="baseline and differential"/>
</dbReference>
<dbReference type="GO" id="GO:0005829">
    <property type="term" value="C:cytosol"/>
    <property type="evidence" value="ECO:0000304"/>
    <property type="project" value="Reactome"/>
</dbReference>
<dbReference type="GO" id="GO:0070062">
    <property type="term" value="C:extracellular exosome"/>
    <property type="evidence" value="ECO:0007005"/>
    <property type="project" value="UniProtKB"/>
</dbReference>
<dbReference type="GO" id="GO:0005524">
    <property type="term" value="F:ATP binding"/>
    <property type="evidence" value="ECO:0007669"/>
    <property type="project" value="UniProtKB-KW"/>
</dbReference>
<dbReference type="GO" id="GO:0160047">
    <property type="term" value="F:muramyl dipeptide kinase activity"/>
    <property type="evidence" value="ECO:0000314"/>
    <property type="project" value="UniProtKB"/>
</dbReference>
<dbReference type="GO" id="GO:0045127">
    <property type="term" value="F:N-acetylglucosamine kinase activity"/>
    <property type="evidence" value="ECO:0000314"/>
    <property type="project" value="UniProtKB"/>
</dbReference>
<dbReference type="GO" id="GO:0009384">
    <property type="term" value="F:N-acylmannosamine kinase activity"/>
    <property type="evidence" value="ECO:0007669"/>
    <property type="project" value="Ensembl"/>
</dbReference>
<dbReference type="GO" id="GO:0042742">
    <property type="term" value="P:defense response to bacterium"/>
    <property type="evidence" value="ECO:0000314"/>
    <property type="project" value="UniProtKB"/>
</dbReference>
<dbReference type="GO" id="GO:0045087">
    <property type="term" value="P:innate immune response"/>
    <property type="evidence" value="ECO:0007669"/>
    <property type="project" value="UniProtKB-KW"/>
</dbReference>
<dbReference type="GO" id="GO:0006046">
    <property type="term" value="P:N-acetylglucosamine catabolic process"/>
    <property type="evidence" value="ECO:0000315"/>
    <property type="project" value="FlyBase"/>
</dbReference>
<dbReference type="GO" id="GO:0006044">
    <property type="term" value="P:N-acetylglucosamine metabolic process"/>
    <property type="evidence" value="ECO:0000304"/>
    <property type="project" value="ProtInc"/>
</dbReference>
<dbReference type="GO" id="GO:0006051">
    <property type="term" value="P:N-acetylmannosamine metabolic process"/>
    <property type="evidence" value="ECO:0000304"/>
    <property type="project" value="ProtInc"/>
</dbReference>
<dbReference type="GO" id="GO:0019262">
    <property type="term" value="P:N-acetylneuraminate catabolic process"/>
    <property type="evidence" value="ECO:0000304"/>
    <property type="project" value="UniProtKB"/>
</dbReference>
<dbReference type="GO" id="GO:0070434">
    <property type="term" value="P:positive regulation of nucleotide-binding oligomerization domain containing 2 signaling pathway"/>
    <property type="evidence" value="ECO:0000314"/>
    <property type="project" value="UniProtKB"/>
</dbReference>
<dbReference type="GO" id="GO:0032495">
    <property type="term" value="P:response to muramyl dipeptide"/>
    <property type="evidence" value="ECO:0000314"/>
    <property type="project" value="UniProtKB"/>
</dbReference>
<dbReference type="GO" id="GO:0006048">
    <property type="term" value="P:UDP-N-acetylglucosamine biosynthetic process"/>
    <property type="evidence" value="ECO:0000315"/>
    <property type="project" value="FlyBase"/>
</dbReference>
<dbReference type="CDD" id="cd24078">
    <property type="entry name" value="ASKHA_NBD_NAGK_meta"/>
    <property type="match status" value="1"/>
</dbReference>
<dbReference type="FunFam" id="3.30.420.40:FF:000120">
    <property type="entry name" value="N-acetyl-D-glucosamine kinase isoform X1"/>
    <property type="match status" value="1"/>
</dbReference>
<dbReference type="Gene3D" id="3.30.420.40">
    <property type="match status" value="1"/>
</dbReference>
<dbReference type="InterPro" id="IPR002731">
    <property type="entry name" value="ATPase_BadF"/>
</dbReference>
<dbReference type="InterPro" id="IPR043129">
    <property type="entry name" value="ATPase_NBD"/>
</dbReference>
<dbReference type="InterPro" id="IPR039758">
    <property type="entry name" value="NAGK-like"/>
</dbReference>
<dbReference type="PANTHER" id="PTHR12862">
    <property type="entry name" value="BADF TYPE ATPASE DOMAIN-CONTAINING PROTEIN"/>
    <property type="match status" value="1"/>
</dbReference>
<dbReference type="PANTHER" id="PTHR12862:SF0">
    <property type="entry name" value="N-ACETYL-D-GLUCOSAMINE KINASE"/>
    <property type="match status" value="1"/>
</dbReference>
<dbReference type="Pfam" id="PF01869">
    <property type="entry name" value="BcrAD_BadFG"/>
    <property type="match status" value="1"/>
</dbReference>
<dbReference type="SUPFAM" id="SSF53067">
    <property type="entry name" value="Actin-like ATPase domain"/>
    <property type="match status" value="2"/>
</dbReference>
<protein>
    <recommendedName>
        <fullName evidence="12">N-acetyl-D-glucosamine kinase</fullName>
        <shortName evidence="9">N-acetylglucosamine kinase</shortName>
        <ecNumber evidence="2 7">2.7.1.59</ecNumber>
    </recommendedName>
    <alternativeName>
        <fullName>GlcNAc kinase</fullName>
    </alternativeName>
    <alternativeName>
        <fullName evidence="12">Muramyl dipeptide kinase</fullName>
        <ecNumber evidence="8">2.7.1.-</ecNumber>
    </alternativeName>
    <alternativeName>
        <fullName evidence="12">N-acetyl-D-mannosamine kinase</fullName>
        <ecNumber evidence="1">2.7.1.60</ecNumber>
    </alternativeName>
</protein>
<keyword id="KW-0002">3D-structure</keyword>
<keyword id="KW-0007">Acetylation</keyword>
<keyword id="KW-0025">Alternative splicing</keyword>
<keyword id="KW-0067">ATP-binding</keyword>
<keyword id="KW-0903">Direct protein sequencing</keyword>
<keyword id="KW-0391">Immunity</keyword>
<keyword id="KW-0399">Innate immunity</keyword>
<keyword id="KW-0418">Kinase</keyword>
<keyword id="KW-0547">Nucleotide-binding</keyword>
<keyword id="KW-0597">Phosphoprotein</keyword>
<keyword id="KW-1267">Proteomics identification</keyword>
<keyword id="KW-1185">Reference proteome</keyword>
<keyword id="KW-0808">Transferase</keyword>
<organism>
    <name type="scientific">Homo sapiens</name>
    <name type="common">Human</name>
    <dbReference type="NCBI Taxonomy" id="9606"/>
    <lineage>
        <taxon>Eukaryota</taxon>
        <taxon>Metazoa</taxon>
        <taxon>Chordata</taxon>
        <taxon>Craniata</taxon>
        <taxon>Vertebrata</taxon>
        <taxon>Euteleostomi</taxon>
        <taxon>Mammalia</taxon>
        <taxon>Eutheria</taxon>
        <taxon>Euarchontoglires</taxon>
        <taxon>Primates</taxon>
        <taxon>Haplorrhini</taxon>
        <taxon>Catarrhini</taxon>
        <taxon>Hominidae</taxon>
        <taxon>Homo</taxon>
    </lineage>
</organism>
<accession>Q9UJ70</accession>
<accession>B4DLZ5</accession>
<accession>Q53HD5</accession>
<accession>Q6IA84</accession>
<accession>Q9BS29</accession>
<accession>Q9BVP0</accession>
<accession>Q9NV37</accession>
<proteinExistence type="evidence at protein level"/>